<proteinExistence type="predicted"/>
<protein>
    <recommendedName>
        <fullName>Uncharacterized protein MJ1340</fullName>
    </recommendedName>
</protein>
<organism>
    <name type="scientific">Methanocaldococcus jannaschii (strain ATCC 43067 / DSM 2661 / JAL-1 / JCM 10045 / NBRC 100440)</name>
    <name type="common">Methanococcus jannaschii</name>
    <dbReference type="NCBI Taxonomy" id="243232"/>
    <lineage>
        <taxon>Archaea</taxon>
        <taxon>Methanobacteriati</taxon>
        <taxon>Methanobacteriota</taxon>
        <taxon>Methanomada group</taxon>
        <taxon>Methanococci</taxon>
        <taxon>Methanococcales</taxon>
        <taxon>Methanocaldococcaceae</taxon>
        <taxon>Methanocaldococcus</taxon>
    </lineage>
</organism>
<dbReference type="EMBL" id="L77117">
    <property type="protein sequence ID" value="AAB99350.1"/>
    <property type="molecule type" value="Genomic_DNA"/>
</dbReference>
<dbReference type="PIR" id="C64467">
    <property type="entry name" value="C64467"/>
</dbReference>
<dbReference type="RefSeq" id="WP_010870858.1">
    <property type="nucleotide sequence ID" value="NC_000909.1"/>
</dbReference>
<dbReference type="SMR" id="Q58736"/>
<dbReference type="STRING" id="243232.MJ_1340"/>
<dbReference type="PaxDb" id="243232-MJ_1340"/>
<dbReference type="EnsemblBacteria" id="AAB99350">
    <property type="protein sequence ID" value="AAB99350"/>
    <property type="gene ID" value="MJ_1340"/>
</dbReference>
<dbReference type="GeneID" id="1452243"/>
<dbReference type="KEGG" id="mja:MJ_1340"/>
<dbReference type="eggNOG" id="arCOG02603">
    <property type="taxonomic scope" value="Archaea"/>
</dbReference>
<dbReference type="HOGENOM" id="CLU_118613_4_0_2"/>
<dbReference type="InParanoid" id="Q58736"/>
<dbReference type="OrthoDB" id="92542at2157"/>
<dbReference type="PhylomeDB" id="Q58736"/>
<dbReference type="Proteomes" id="UP000000805">
    <property type="component" value="Chromosome"/>
</dbReference>
<dbReference type="GO" id="GO:0005085">
    <property type="term" value="F:guanyl-nucleotide exchange factor activity"/>
    <property type="evidence" value="ECO:0007669"/>
    <property type="project" value="InterPro"/>
</dbReference>
<dbReference type="GO" id="GO:0060090">
    <property type="term" value="F:molecular adaptor activity"/>
    <property type="evidence" value="ECO:0007669"/>
    <property type="project" value="InterPro"/>
</dbReference>
<dbReference type="GO" id="GO:0071230">
    <property type="term" value="P:cellular response to amino acid stimulus"/>
    <property type="evidence" value="ECO:0000318"/>
    <property type="project" value="GO_Central"/>
</dbReference>
<dbReference type="GO" id="GO:0032008">
    <property type="term" value="P:positive regulation of TOR signaling"/>
    <property type="evidence" value="ECO:0000318"/>
    <property type="project" value="GO_Central"/>
</dbReference>
<dbReference type="FunFam" id="3.30.450.30:FF:000052">
    <property type="entry name" value="Uncharacterized protein MJ1340"/>
    <property type="match status" value="1"/>
</dbReference>
<dbReference type="Gene3D" id="3.30.450.30">
    <property type="entry name" value="Dynein light chain 2a, cytoplasmic"/>
    <property type="match status" value="1"/>
</dbReference>
<dbReference type="InterPro" id="IPR037587">
    <property type="entry name" value="LAMTOR2-like"/>
</dbReference>
<dbReference type="InterPro" id="IPR004942">
    <property type="entry name" value="Roadblock/LAMTOR2_dom"/>
</dbReference>
<dbReference type="PANTHER" id="PTHR13323">
    <property type="entry name" value="LATE ENDOSOMAL/LYSOSOMAL MP1 INTERACTING PROTEIN"/>
    <property type="match status" value="1"/>
</dbReference>
<dbReference type="Pfam" id="PF03259">
    <property type="entry name" value="Robl_LC7"/>
    <property type="match status" value="1"/>
</dbReference>
<dbReference type="SMART" id="SM00960">
    <property type="entry name" value="Robl_LC7"/>
    <property type="match status" value="1"/>
</dbReference>
<dbReference type="SUPFAM" id="SSF103196">
    <property type="entry name" value="Roadblock/LC7 domain"/>
    <property type="match status" value="1"/>
</dbReference>
<evidence type="ECO:0000305" key="1"/>
<keyword id="KW-1185">Reference proteome</keyword>
<sequence>MIDRVLLELNKTEGIKGSMVVGKDGLVIASQLPGSVDAELVGAMASAAFGAAERTAAEIGMGTLEQTMIEGEHGKTLMVDAGEGILVVLTDAKVNLGLIRITMKRAAEKIKAMF</sequence>
<reference key="1">
    <citation type="journal article" date="1996" name="Science">
        <title>Complete genome sequence of the methanogenic archaeon, Methanococcus jannaschii.</title>
        <authorList>
            <person name="Bult C.J."/>
            <person name="White O."/>
            <person name="Olsen G.J."/>
            <person name="Zhou L."/>
            <person name="Fleischmann R.D."/>
            <person name="Sutton G.G."/>
            <person name="Blake J.A."/>
            <person name="FitzGerald L.M."/>
            <person name="Clayton R.A."/>
            <person name="Gocayne J.D."/>
            <person name="Kerlavage A.R."/>
            <person name="Dougherty B.A."/>
            <person name="Tomb J.-F."/>
            <person name="Adams M.D."/>
            <person name="Reich C.I."/>
            <person name="Overbeek R."/>
            <person name="Kirkness E.F."/>
            <person name="Weinstock K.G."/>
            <person name="Merrick J.M."/>
            <person name="Glodek A."/>
            <person name="Scott J.L."/>
            <person name="Geoghagen N.S.M."/>
            <person name="Weidman J.F."/>
            <person name="Fuhrmann J.L."/>
            <person name="Nguyen D."/>
            <person name="Utterback T.R."/>
            <person name="Kelley J.M."/>
            <person name="Peterson J.D."/>
            <person name="Sadow P.W."/>
            <person name="Hanna M.C."/>
            <person name="Cotton M.D."/>
            <person name="Roberts K.M."/>
            <person name="Hurst M.A."/>
            <person name="Kaine B.P."/>
            <person name="Borodovsky M."/>
            <person name="Klenk H.-P."/>
            <person name="Fraser C.M."/>
            <person name="Smith H.O."/>
            <person name="Woese C.R."/>
            <person name="Venter J.C."/>
        </authorList>
    </citation>
    <scope>NUCLEOTIDE SEQUENCE [LARGE SCALE GENOMIC DNA]</scope>
    <source>
        <strain>ATCC 43067 / DSM 2661 / JAL-1 / JCM 10045 / NBRC 100440</strain>
    </source>
</reference>
<name>Y1340_METJA</name>
<gene>
    <name type="ordered locus">MJ1340</name>
</gene>
<comment type="similarity">
    <text evidence="1">To M.jannaschii MJ0310 and MJ0714.</text>
</comment>
<accession>Q58736</accession>
<feature type="chain" id="PRO_0000107284" description="Uncharacterized protein MJ1340">
    <location>
        <begin position="1"/>
        <end position="114"/>
    </location>
</feature>